<gene>
    <name evidence="1" type="primary">rlmC</name>
    <name type="synonym">rumB</name>
    <name type="ordered locus">Sbal_0868</name>
</gene>
<name>RLMC_SHEB5</name>
<organism>
    <name type="scientific">Shewanella baltica (strain OS155 / ATCC BAA-1091)</name>
    <dbReference type="NCBI Taxonomy" id="325240"/>
    <lineage>
        <taxon>Bacteria</taxon>
        <taxon>Pseudomonadati</taxon>
        <taxon>Pseudomonadota</taxon>
        <taxon>Gammaproteobacteria</taxon>
        <taxon>Alteromonadales</taxon>
        <taxon>Shewanellaceae</taxon>
        <taxon>Shewanella</taxon>
    </lineage>
</organism>
<protein>
    <recommendedName>
        <fullName evidence="1">23S rRNA (uracil(747)-C(5))-methyltransferase RlmC</fullName>
        <ecNumber evidence="1">2.1.1.189</ecNumber>
    </recommendedName>
    <alternativeName>
        <fullName evidence="1">23S rRNA(m5U747)-methyltransferase</fullName>
    </alternativeName>
</protein>
<reference key="1">
    <citation type="submission" date="2007-02" db="EMBL/GenBank/DDBJ databases">
        <title>Complete sequence of chromosome of Shewanella baltica OS155.</title>
        <authorList>
            <consortium name="US DOE Joint Genome Institute"/>
            <person name="Copeland A."/>
            <person name="Lucas S."/>
            <person name="Lapidus A."/>
            <person name="Barry K."/>
            <person name="Detter J.C."/>
            <person name="Glavina del Rio T."/>
            <person name="Hammon N."/>
            <person name="Israni S."/>
            <person name="Dalin E."/>
            <person name="Tice H."/>
            <person name="Pitluck S."/>
            <person name="Sims D.R."/>
            <person name="Brettin T."/>
            <person name="Bruce D."/>
            <person name="Han C."/>
            <person name="Tapia R."/>
            <person name="Brainard J."/>
            <person name="Schmutz J."/>
            <person name="Larimer F."/>
            <person name="Land M."/>
            <person name="Hauser L."/>
            <person name="Kyrpides N."/>
            <person name="Mikhailova N."/>
            <person name="Brettar I."/>
            <person name="Klappenbach J."/>
            <person name="Konstantinidis K."/>
            <person name="Rodrigues J."/>
            <person name="Tiedje J."/>
            <person name="Richardson P."/>
        </authorList>
    </citation>
    <scope>NUCLEOTIDE SEQUENCE [LARGE SCALE GENOMIC DNA]</scope>
    <source>
        <strain>OS155 / ATCC BAA-1091</strain>
    </source>
</reference>
<dbReference type="EC" id="2.1.1.189" evidence="1"/>
<dbReference type="EMBL" id="CP000563">
    <property type="protein sequence ID" value="ABN60393.1"/>
    <property type="molecule type" value="Genomic_DNA"/>
</dbReference>
<dbReference type="RefSeq" id="WP_011845951.1">
    <property type="nucleotide sequence ID" value="NC_009052.1"/>
</dbReference>
<dbReference type="SMR" id="A3D0Y0"/>
<dbReference type="STRING" id="325240.Sbal_0868"/>
<dbReference type="KEGG" id="sbl:Sbal_0868"/>
<dbReference type="HOGENOM" id="CLU_014689_0_0_6"/>
<dbReference type="Proteomes" id="UP000001557">
    <property type="component" value="Chromosome"/>
</dbReference>
<dbReference type="GO" id="GO:0051539">
    <property type="term" value="F:4 iron, 4 sulfur cluster binding"/>
    <property type="evidence" value="ECO:0007669"/>
    <property type="project" value="UniProtKB-KW"/>
</dbReference>
<dbReference type="GO" id="GO:0005506">
    <property type="term" value="F:iron ion binding"/>
    <property type="evidence" value="ECO:0007669"/>
    <property type="project" value="UniProtKB-UniRule"/>
</dbReference>
<dbReference type="GO" id="GO:0070041">
    <property type="term" value="F:rRNA (uridine-C5-)-methyltransferase activity"/>
    <property type="evidence" value="ECO:0007669"/>
    <property type="project" value="UniProtKB-UniRule"/>
</dbReference>
<dbReference type="GO" id="GO:0070475">
    <property type="term" value="P:rRNA base methylation"/>
    <property type="evidence" value="ECO:0007669"/>
    <property type="project" value="TreeGrafter"/>
</dbReference>
<dbReference type="CDD" id="cd02440">
    <property type="entry name" value="AdoMet_MTases"/>
    <property type="match status" value="1"/>
</dbReference>
<dbReference type="Gene3D" id="2.40.50.1070">
    <property type="match status" value="1"/>
</dbReference>
<dbReference type="Gene3D" id="3.40.50.150">
    <property type="entry name" value="Vaccinia Virus protein VP39"/>
    <property type="match status" value="1"/>
</dbReference>
<dbReference type="HAMAP" id="MF_01012">
    <property type="entry name" value="23SrRNA_methyltr_RlmC"/>
    <property type="match status" value="1"/>
</dbReference>
<dbReference type="InterPro" id="IPR011825">
    <property type="entry name" value="23SrRNA_MeTrfase_RlmC"/>
</dbReference>
<dbReference type="InterPro" id="IPR030390">
    <property type="entry name" value="MeTrfase_TrmA_AS"/>
</dbReference>
<dbReference type="InterPro" id="IPR030391">
    <property type="entry name" value="MeTrfase_TrmA_CS"/>
</dbReference>
<dbReference type="InterPro" id="IPR029063">
    <property type="entry name" value="SAM-dependent_MTases_sf"/>
</dbReference>
<dbReference type="InterPro" id="IPR010280">
    <property type="entry name" value="U5_MeTrfase_fam"/>
</dbReference>
<dbReference type="NCBIfam" id="TIGR02085">
    <property type="entry name" value="meth_trns_rumB"/>
    <property type="match status" value="1"/>
</dbReference>
<dbReference type="NCBIfam" id="TIGR00479">
    <property type="entry name" value="rumA"/>
    <property type="match status" value="1"/>
</dbReference>
<dbReference type="PANTHER" id="PTHR11061">
    <property type="entry name" value="RNA M5U METHYLTRANSFERASE"/>
    <property type="match status" value="1"/>
</dbReference>
<dbReference type="PANTHER" id="PTHR11061:SF30">
    <property type="entry name" value="TRNA (URACIL(54)-C(5))-METHYLTRANSFERASE"/>
    <property type="match status" value="1"/>
</dbReference>
<dbReference type="Pfam" id="PF05958">
    <property type="entry name" value="tRNA_U5-meth_tr"/>
    <property type="match status" value="1"/>
</dbReference>
<dbReference type="SUPFAM" id="SSF53335">
    <property type="entry name" value="S-adenosyl-L-methionine-dependent methyltransferases"/>
    <property type="match status" value="1"/>
</dbReference>
<dbReference type="PROSITE" id="PS51687">
    <property type="entry name" value="SAM_MT_RNA_M5U"/>
    <property type="match status" value="1"/>
</dbReference>
<dbReference type="PROSITE" id="PS01230">
    <property type="entry name" value="TRMA_1"/>
    <property type="match status" value="1"/>
</dbReference>
<dbReference type="PROSITE" id="PS01231">
    <property type="entry name" value="TRMA_2"/>
    <property type="match status" value="1"/>
</dbReference>
<proteinExistence type="inferred from homology"/>
<comment type="function">
    <text evidence="1">Catalyzes the formation of 5-methyl-uridine at position 747 (m5U747) in 23S rRNA.</text>
</comment>
<comment type="catalytic activity">
    <reaction evidence="1">
        <text>uridine(747) in 23S rRNA + S-adenosyl-L-methionine = 5-methyluridine(747) in 23S rRNA + S-adenosyl-L-homocysteine + H(+)</text>
        <dbReference type="Rhea" id="RHEA:42628"/>
        <dbReference type="Rhea" id="RHEA-COMP:10154"/>
        <dbReference type="Rhea" id="RHEA-COMP:10155"/>
        <dbReference type="ChEBI" id="CHEBI:15378"/>
        <dbReference type="ChEBI" id="CHEBI:57856"/>
        <dbReference type="ChEBI" id="CHEBI:59789"/>
        <dbReference type="ChEBI" id="CHEBI:65315"/>
        <dbReference type="ChEBI" id="CHEBI:74447"/>
        <dbReference type="EC" id="2.1.1.189"/>
    </reaction>
</comment>
<comment type="similarity">
    <text evidence="1">Belongs to the class I-like SAM-binding methyltransferase superfamily. RNA M5U methyltransferase family. RlmC subfamily.</text>
</comment>
<accession>A3D0Y0</accession>
<keyword id="KW-0004">4Fe-4S</keyword>
<keyword id="KW-0408">Iron</keyword>
<keyword id="KW-0411">Iron-sulfur</keyword>
<keyword id="KW-0479">Metal-binding</keyword>
<keyword id="KW-0489">Methyltransferase</keyword>
<keyword id="KW-1185">Reference proteome</keyword>
<keyword id="KW-0698">rRNA processing</keyword>
<keyword id="KW-0949">S-adenosyl-L-methionine</keyword>
<keyword id="KW-0808">Transferase</keyword>
<feature type="chain" id="PRO_1000063005" description="23S rRNA (uracil(747)-C(5))-methyltransferase RlmC">
    <location>
        <begin position="1"/>
        <end position="390"/>
    </location>
</feature>
<feature type="active site" description="Nucleophile" evidence="1">
    <location>
        <position position="349"/>
    </location>
</feature>
<feature type="binding site" evidence="1">
    <location>
        <position position="12"/>
    </location>
    <ligand>
        <name>[4Fe-4S] cluster</name>
        <dbReference type="ChEBI" id="CHEBI:49883"/>
    </ligand>
</feature>
<feature type="binding site" evidence="1">
    <location>
        <position position="20"/>
    </location>
    <ligand>
        <name>[4Fe-4S] cluster</name>
        <dbReference type="ChEBI" id="CHEBI:49883"/>
    </ligand>
</feature>
<feature type="binding site" evidence="1">
    <location>
        <position position="23"/>
    </location>
    <ligand>
        <name>[4Fe-4S] cluster</name>
        <dbReference type="ChEBI" id="CHEBI:49883"/>
    </ligand>
</feature>
<feature type="binding site" evidence="1">
    <location>
        <position position="100"/>
    </location>
    <ligand>
        <name>[4Fe-4S] cluster</name>
        <dbReference type="ChEBI" id="CHEBI:49883"/>
    </ligand>
</feature>
<feature type="binding site" evidence="1">
    <location>
        <position position="225"/>
    </location>
    <ligand>
        <name>S-adenosyl-L-methionine</name>
        <dbReference type="ChEBI" id="CHEBI:59789"/>
    </ligand>
</feature>
<feature type="binding site" evidence="1">
    <location>
        <position position="254"/>
    </location>
    <ligand>
        <name>S-adenosyl-L-methionine</name>
        <dbReference type="ChEBI" id="CHEBI:59789"/>
    </ligand>
</feature>
<feature type="binding site" evidence="1">
    <location>
        <position position="275"/>
    </location>
    <ligand>
        <name>S-adenosyl-L-methionine</name>
        <dbReference type="ChEBI" id="CHEBI:59789"/>
    </ligand>
</feature>
<feature type="binding site" evidence="1">
    <location>
        <position position="322"/>
    </location>
    <ligand>
        <name>S-adenosyl-L-methionine</name>
        <dbReference type="ChEBI" id="CHEBI:59789"/>
    </ligand>
</feature>
<sequence length="390" mass="43300">MSAAIVNAVKQCGYFNQGQCLSCRHIQQPLAQQVAVKTQTLQQLLAPFIPANSAELFLPPITGDDSGFRNKAKMVVLGAAHEPVLGIVGPSGEAVDLCDCLLYPADMQALLHRLTRFVQQAGLPPYRVDKAKGELKFILLTRSQVRGEYLLRFVLRSHNGIERIERELPALLAEYPQIKVVSVNIQPIHMAILEGDEEIFLTENTRLEERFNHVPLFIRPKSFFQTNPQVAAQLYQTAREWVAEFSPRSLWDLFCGVGGFGLHCASNDITLTGIEIEAEAIACAQMSAQMMGLENVQFMALDSTDFAKGKSAADKPDLIIVNPPRRGIGEALCQSLSEFAPKAILYSSCNPKTLAKDLEHIQGYHLTKVQLFDLFPHSDHFEVLAMLVKD</sequence>
<evidence type="ECO:0000255" key="1">
    <source>
        <dbReference type="HAMAP-Rule" id="MF_01012"/>
    </source>
</evidence>